<gene>
    <name evidence="39 43" type="primary">Gdf15</name>
    <name evidence="40 41" type="synonym">Mic1</name>
    <name type="synonym">Sbf</name>
</gene>
<organism>
    <name type="scientific">Mus musculus</name>
    <name type="common">Mouse</name>
    <dbReference type="NCBI Taxonomy" id="10090"/>
    <lineage>
        <taxon>Eukaryota</taxon>
        <taxon>Metazoa</taxon>
        <taxon>Chordata</taxon>
        <taxon>Craniata</taxon>
        <taxon>Vertebrata</taxon>
        <taxon>Euteleostomi</taxon>
        <taxon>Mammalia</taxon>
        <taxon>Eutheria</taxon>
        <taxon>Euarchontoglires</taxon>
        <taxon>Glires</taxon>
        <taxon>Rodentia</taxon>
        <taxon>Myomorpha</taxon>
        <taxon>Muroidea</taxon>
        <taxon>Muridae</taxon>
        <taxon>Murinae</taxon>
        <taxon>Mus</taxon>
        <taxon>Mus</taxon>
    </lineage>
</organism>
<dbReference type="EMBL" id="AJ011967">
    <property type="protein sequence ID" value="CAA09890.1"/>
    <property type="molecule type" value="Genomic_DNA"/>
</dbReference>
<dbReference type="EMBL" id="AJ011968">
    <property type="protein sequence ID" value="CAA09890.1"/>
    <property type="status" value="JOINED"/>
    <property type="molecule type" value="Genomic_DNA"/>
</dbReference>
<dbReference type="EMBL" id="AF159571">
    <property type="protein sequence ID" value="AAD41410.1"/>
    <property type="molecule type" value="mRNA"/>
</dbReference>
<dbReference type="EMBL" id="AK159242">
    <property type="protein sequence ID" value="BAE34924.1"/>
    <property type="molecule type" value="mRNA"/>
</dbReference>
<dbReference type="EMBL" id="AC157774">
    <property type="status" value="NOT_ANNOTATED_CDS"/>
    <property type="molecule type" value="Genomic_DNA"/>
</dbReference>
<dbReference type="EMBL" id="CH466569">
    <property type="protein sequence ID" value="EDL28851.1"/>
    <property type="molecule type" value="Genomic_DNA"/>
</dbReference>
<dbReference type="EMBL" id="BC067248">
    <property type="protein sequence ID" value="AAH67248.1"/>
    <property type="molecule type" value="mRNA"/>
</dbReference>
<dbReference type="CCDS" id="CCDS22376.1"/>
<dbReference type="RefSeq" id="NP_001317616.1">
    <property type="nucleotide sequence ID" value="NM_001330687.1"/>
</dbReference>
<dbReference type="RefSeq" id="NP_035949.2">
    <property type="nucleotide sequence ID" value="NM_011819.4"/>
</dbReference>
<dbReference type="SMR" id="Q9Z0J7"/>
<dbReference type="FunCoup" id="Q9Z0J7">
    <property type="interactions" value="425"/>
</dbReference>
<dbReference type="STRING" id="10090.ENSMUSP00000003808"/>
<dbReference type="GlyCosmos" id="Q9Z0J7">
    <property type="glycosylation" value="1 site, No reported glycans"/>
</dbReference>
<dbReference type="GlyGen" id="Q9Z0J7">
    <property type="glycosylation" value="1 site"/>
</dbReference>
<dbReference type="PhosphoSitePlus" id="Q9Z0J7"/>
<dbReference type="PaxDb" id="10090-ENSMUSP00000003808"/>
<dbReference type="ProteomicsDB" id="271205"/>
<dbReference type="Antibodypedia" id="2781">
    <property type="antibodies" value="1008 antibodies from 43 providers"/>
</dbReference>
<dbReference type="DNASU" id="23886"/>
<dbReference type="Ensembl" id="ENSMUST00000003808.8">
    <property type="protein sequence ID" value="ENSMUSP00000003808.8"/>
    <property type="gene ID" value="ENSMUSG00000038508.8"/>
</dbReference>
<dbReference type="Ensembl" id="ENSMUST00000110103.2">
    <property type="protein sequence ID" value="ENSMUSP00000105730.2"/>
    <property type="gene ID" value="ENSMUSG00000038508.8"/>
</dbReference>
<dbReference type="GeneID" id="23886"/>
<dbReference type="KEGG" id="mmu:23886"/>
<dbReference type="UCSC" id="uc009mba.2">
    <property type="organism name" value="mouse"/>
</dbReference>
<dbReference type="AGR" id="MGI:1346047"/>
<dbReference type="CTD" id="9518"/>
<dbReference type="MGI" id="MGI:1346047">
    <property type="gene designation" value="Gdf15"/>
</dbReference>
<dbReference type="VEuPathDB" id="HostDB:ENSMUSG00000038508"/>
<dbReference type="eggNOG" id="KOG3900">
    <property type="taxonomic scope" value="Eukaryota"/>
</dbReference>
<dbReference type="GeneTree" id="ENSGT00940000161872"/>
<dbReference type="HOGENOM" id="CLU_064099_1_0_1"/>
<dbReference type="InParanoid" id="Q9Z0J7"/>
<dbReference type="OMA" id="DHCPLGP"/>
<dbReference type="OrthoDB" id="10030979at2759"/>
<dbReference type="PhylomeDB" id="Q9Z0J7"/>
<dbReference type="TreeFam" id="TF351787"/>
<dbReference type="BioGRID-ORCS" id="23886">
    <property type="hits" value="3 hits in 78 CRISPR screens"/>
</dbReference>
<dbReference type="ChiTaRS" id="Gdf15">
    <property type="organism name" value="mouse"/>
</dbReference>
<dbReference type="PRO" id="PR:Q9Z0J7"/>
<dbReference type="Proteomes" id="UP000000589">
    <property type="component" value="Chromosome 8"/>
</dbReference>
<dbReference type="RNAct" id="Q9Z0J7">
    <property type="molecule type" value="protein"/>
</dbReference>
<dbReference type="Bgee" id="ENSMUSG00000038508">
    <property type="expression patterns" value="Expressed in stroma of bone marrow and 39 other cell types or tissues"/>
</dbReference>
<dbReference type="GO" id="GO:0005737">
    <property type="term" value="C:cytoplasm"/>
    <property type="evidence" value="ECO:0000250"/>
    <property type="project" value="UniProtKB"/>
</dbReference>
<dbReference type="GO" id="GO:0005576">
    <property type="term" value="C:extracellular region"/>
    <property type="evidence" value="ECO:0000314"/>
    <property type="project" value="UniProtKB"/>
</dbReference>
<dbReference type="GO" id="GO:0005615">
    <property type="term" value="C:extracellular space"/>
    <property type="evidence" value="ECO:0000250"/>
    <property type="project" value="UniProtKB"/>
</dbReference>
<dbReference type="GO" id="GO:0005794">
    <property type="term" value="C:Golgi apparatus"/>
    <property type="evidence" value="ECO:0007669"/>
    <property type="project" value="Ensembl"/>
</dbReference>
<dbReference type="GO" id="GO:0005634">
    <property type="term" value="C:nucleus"/>
    <property type="evidence" value="ECO:0000250"/>
    <property type="project" value="UniProtKB"/>
</dbReference>
<dbReference type="GO" id="GO:0005125">
    <property type="term" value="F:cytokine activity"/>
    <property type="evidence" value="ECO:0000314"/>
    <property type="project" value="UniProtKB"/>
</dbReference>
<dbReference type="GO" id="GO:0008083">
    <property type="term" value="F:growth factor activity"/>
    <property type="evidence" value="ECO:0007669"/>
    <property type="project" value="InterPro"/>
</dbReference>
<dbReference type="GO" id="GO:0005179">
    <property type="term" value="F:hormone activity"/>
    <property type="evidence" value="ECO:0000314"/>
    <property type="project" value="UniProtKB"/>
</dbReference>
<dbReference type="GO" id="GO:0042803">
    <property type="term" value="F:protein homodimerization activity"/>
    <property type="evidence" value="ECO:0000314"/>
    <property type="project" value="UniProtKB"/>
</dbReference>
<dbReference type="GO" id="GO:0062197">
    <property type="term" value="P:cellular response to chemical stress"/>
    <property type="evidence" value="ECO:0000314"/>
    <property type="project" value="UniProtKB"/>
</dbReference>
<dbReference type="GO" id="GO:0097009">
    <property type="term" value="P:energy homeostasis"/>
    <property type="evidence" value="ECO:0000314"/>
    <property type="project" value="UniProtKB"/>
</dbReference>
<dbReference type="GO" id="GO:0160144">
    <property type="term" value="P:GDF15-GFRAL signaling pathway"/>
    <property type="evidence" value="ECO:0000314"/>
    <property type="project" value="UniProtKB"/>
</dbReference>
<dbReference type="GO" id="GO:0032099">
    <property type="term" value="P:negative regulation of appetite"/>
    <property type="evidence" value="ECO:0000314"/>
    <property type="project" value="UniProtKB"/>
</dbReference>
<dbReference type="GO" id="GO:0060400">
    <property type="term" value="P:negative regulation of growth hormone receptor signaling pathway"/>
    <property type="evidence" value="ECO:0000314"/>
    <property type="project" value="UniProtKB"/>
</dbReference>
<dbReference type="GO" id="GO:0002686">
    <property type="term" value="P:negative regulation of leukocyte migration"/>
    <property type="evidence" value="ECO:0000315"/>
    <property type="project" value="UniProtKB"/>
</dbReference>
<dbReference type="GO" id="GO:0040015">
    <property type="term" value="P:negative regulation of multicellular organism growth"/>
    <property type="evidence" value="ECO:0000314"/>
    <property type="project" value="UniProtKB"/>
</dbReference>
<dbReference type="GO" id="GO:0060392">
    <property type="term" value="P:negative regulation of SMAD protein signal transduction"/>
    <property type="evidence" value="ECO:0000250"/>
    <property type="project" value="UniProtKB"/>
</dbReference>
<dbReference type="GO" id="GO:0030512">
    <property type="term" value="P:negative regulation of transforming growth factor beta receptor signaling pathway"/>
    <property type="evidence" value="ECO:0007669"/>
    <property type="project" value="Ensembl"/>
</dbReference>
<dbReference type="GO" id="GO:0046321">
    <property type="term" value="P:positive regulation of fatty acid oxidation"/>
    <property type="evidence" value="ECO:0000314"/>
    <property type="project" value="UniProtKB"/>
</dbReference>
<dbReference type="GO" id="GO:0043410">
    <property type="term" value="P:positive regulation of MAPK cascade"/>
    <property type="evidence" value="ECO:0000315"/>
    <property type="project" value="GO_Central"/>
</dbReference>
<dbReference type="GO" id="GO:1901741">
    <property type="term" value="P:positive regulation of myoblast fusion"/>
    <property type="evidence" value="ECO:0000315"/>
    <property type="project" value="MGI"/>
</dbReference>
<dbReference type="GO" id="GO:0051897">
    <property type="term" value="P:positive regulation of phosphatidylinositol 3-kinase/protein kinase B signal transduction"/>
    <property type="evidence" value="ECO:0000250"/>
    <property type="project" value="UniProtKB"/>
</dbReference>
<dbReference type="GO" id="GO:0002023">
    <property type="term" value="P:reduction of food intake in response to dietary excess"/>
    <property type="evidence" value="ECO:0000314"/>
    <property type="project" value="UniProtKB"/>
</dbReference>
<dbReference type="GO" id="GO:1901558">
    <property type="term" value="P:response to metformin"/>
    <property type="evidence" value="ECO:0000314"/>
    <property type="project" value="UniProtKB"/>
</dbReference>
<dbReference type="FunFam" id="2.10.90.10:FF:000039">
    <property type="entry name" value="growth/differentiation factor 15"/>
    <property type="match status" value="1"/>
</dbReference>
<dbReference type="Gene3D" id="2.10.90.10">
    <property type="entry name" value="Cystine-knot cytokines"/>
    <property type="match status" value="1"/>
</dbReference>
<dbReference type="InterPro" id="IPR029034">
    <property type="entry name" value="Cystine-knot_cytokine"/>
</dbReference>
<dbReference type="InterPro" id="IPR001839">
    <property type="entry name" value="TGF-b_C"/>
</dbReference>
<dbReference type="InterPro" id="IPR015615">
    <property type="entry name" value="TGF-beta-rel"/>
</dbReference>
<dbReference type="PANTHER" id="PTHR11848:SF78">
    <property type="entry name" value="GROWTH_DIFFERENTIATION FACTOR 15"/>
    <property type="match status" value="1"/>
</dbReference>
<dbReference type="PANTHER" id="PTHR11848">
    <property type="entry name" value="TGF-BETA FAMILY"/>
    <property type="match status" value="1"/>
</dbReference>
<dbReference type="Pfam" id="PF00019">
    <property type="entry name" value="TGF_beta"/>
    <property type="match status" value="1"/>
</dbReference>
<dbReference type="SMART" id="SM00204">
    <property type="entry name" value="TGFB"/>
    <property type="match status" value="1"/>
</dbReference>
<dbReference type="SUPFAM" id="SSF57501">
    <property type="entry name" value="Cystine-knot cytokines"/>
    <property type="match status" value="1"/>
</dbReference>
<dbReference type="PROSITE" id="PS51362">
    <property type="entry name" value="TGF_BETA_2"/>
    <property type="match status" value="1"/>
</dbReference>
<name>GDF15_MOUSE</name>
<comment type="function">
    <text evidence="1 4 6 7 8 10 11 12 13 14 15 16 18 19 20 21 22 23 24 25 26 27 28 29 30 31 32 33 34 35 36 37 38">Hormone produced in response to various stresses to confer information about those stresses to the brain, and trigger an aversive response, characterized by nausea and/or loss of appetite (PubMed:23468844, PubMed:27986797, PubMed:28572090, PubMed:28846097, PubMed:28846098, PubMed:28846099, PubMed:28953886, PubMed:29026214, PubMed:29046435, PubMed:30639358, PubMed:31875646, PubMed:31928886, PubMed:32026535, PubMed:32694673, PubMed:32723474, PubMed:33589633, PubMed:33593916, PubMed:33758420, PubMed:34187898, PubMed:36465107, PubMed:37433299, PubMed:37437602, PubMed:38056430, PubMed:38092039). The aversive response is both required to reduce continuing exposure to those stresses at the time of exposure and to promote avoidance behavior in the future (PubMed:23468844, PubMed:28572090, PubMed:28846097, PubMed:28846099, PubMed:28953886, PubMed:29046435, PubMed:30639358, PubMed:33589633, PubMed:33593916, PubMed:37437602, PubMed:38092039). Acts by binding to its receptor, GFRAL, activating GFRAL-expressing neurons localized in the area postrema and nucleus tractus solitarius of the brainstem (PubMed:28846097, PubMed:28846098, PubMed:28846099, PubMed:28953886, PubMed:31152154, PubMed:31928886, PubMed:33593916, PubMed:37380764). It then triggers the activation of neurons localized within the parabrachial nucleus and central amygdala, which constitutes part of the 'emergency circuit' that shapes responses to stressful conditions (PubMed:28846097, PubMed:28846098, PubMed:28846099, PubMed:28953886). The GDF15-GFRAL signal induces expression of genes involved in metabolism, such as lipid metabolism in adipose tissues (PubMed:27986797, PubMed:32661391). Required for avoidance behavior in response to food allergens: induced downstream of mast cell activation to promote aversion and minimize harmful effects of exposure to noxious substances (PubMed:37437602). In addition to suppress appetite, also promotes weight loss by enhancing energy expenditure in muscle: acts by increasing calcium futile cycling in muscle (PubMed:37380764). Contributes to the effect of metformin, an anti-diabetic drug, on appetite reduction and weight loss: produced in the kidney in response to metformin treatment, thereby activating the GDF15-GFRAL response, leading to reduced appetite and weight (PubMed:31875646, PubMed:32694673, PubMed:36001956). Produced in response to anticancer drugs, such as camptothecin or cisplatin, promoting nausea and contributing to malnutrition (PubMed:31928886, PubMed:33207247, PubMed:35202387). Overproduced in many cancers, promoting anorexia in cancer (cachexia) (PubMed:17982462, PubMed:32661391, PubMed:32723474). Responsible for the risk of nausea during pregnancy: high levels of GDF15 during pregnancy, mostly originating from embryos, are associated with increased nausea (PubMed:38092039). Maternal sensitivity to nausea is probably determined by pre-pregnancy exposure to GDF15, females with naturally high level of GDF15 being less susceptible to nausea than female mice with low levels of GDF15 before pregnancy (By similarity). Promotes metabolic adaptation in response to systemic inflammation caused by bacterial and viral infections in order to promote tissue tolerance and prevent tissue damage (By similarity). Required for tissue tolerance in response to myocardial infarction by acting as an inhibitor of leukocyte integring activation, thereby protecting against cardiac rupture (PubMed:21516086). Inhibits growth hormone signaling on hepatocytes (PubMed:28572090).</text>
</comment>
<comment type="subunit">
    <text evidence="1 12 13">Homodimer; disulfide-linked (By similarity). Interacts with GFRAL and RET; ligand of GFRAL, which mediates GDF15 internalization and cellular signaling through interaction with RET via the formation of a 2:2:2 ternary complex composed of GDF15, GFRAL and RET (PubMed:28846098, PubMed:28846099).</text>
</comment>
<comment type="subcellular location">
    <subcellularLocation>
        <location evidence="10 16 24 31 32 33">Secreted</location>
    </subcellularLocation>
    <text evidence="10 16">Secreted in the plasma.</text>
</comment>
<comment type="tissue specificity">
    <text evidence="3 8 10 16 20 22 31 33">Detected in plasma (at protein level) (PubMed:28572090, PubMed:29046435). Highly expressed in liver (PubMed:10779363, PubMed:28572090, PubMed:29046435, PubMed:35202387, PubMed:36465107). Expressed in the distal small intestine, colon and kidney (PubMed:31875646). Expressed in skeletal muscle in response to mitochondrial stress (PubMed:27986797, PubMed:32026535). Expressed by cardiomyocytes, expression is highly increased in heart diseases (PubMed:28572090). Also detected in subcutaneous fat (PubMed:28572090, PubMed:29046435).</text>
</comment>
<comment type="developmental stage">
    <text evidence="10">At postnatal day 3 (P3), detected in heart and plasma, expression decreases with lower levels at P7 to, at least, P13.</text>
</comment>
<comment type="induction">
    <text evidence="6 8 16 18 20 21 22 24 25 26 27 29 31 32 37">Produced in response to various stresses, such as metabolic and toxin-induced stresses or drugs (PubMed:21516086, PubMed:27986797, PubMed:30639358, PubMed:31875646, PubMed:32026535, PubMed:32694673, PubMed:33207247, PubMed:33758420, PubMed:35202387, PubMed:36001956). Expression is activated by ATF4 and DDIT3/CHOP transcription factors downstream of the integrated stress response (ISR) (PubMed:27986797, PubMed:30639358, PubMed:32026535, PubMed:32694673, PubMed:35202387). Induced in macrophages in response to lysosomal stress in a Tfeb-dependent manner (PubMed:33758420). Expressed in response to mitochondrial stress (PubMed:27986797, PubMed:32026535). Expression is induced by metformin, a blood-glucose-lowering drug (PubMed:31875646, PubMed:32694673, PubMed:36001956). Expression is induced by cisplatin and camptothecin anticancer drugs (PubMed:31928886, PubMed:32723474, PubMed:33207247). Expressed following sustained high-fat feeding or dietary amino acid imbalance (PubMed:30639358). Also induced by physical activity (PubMed:33589633). Expression is up-regulated by obesity (PubMed:29046435). Expression is up-regulated by ketogenic diet (PubMed:38056430).</text>
</comment>
<comment type="disruption phenotype">
    <text evidence="5 6 7 9 17 20 22 24 26 33">Mutants weight more, have increases adiposity associated with increased spontaneous food intake and exhibit reduced basal energy expenditure and physical activity (PubMed:23468844, PubMed:36465107). Female mutants exhibit some additional alterations in reduced basal energy expenditure and physical activity (PubMed:23468844). Mutants mice on high fat diet develop obesity compared to wild-type mice (PubMed:30070999). Mice also show progressive postnatal loss of spinal, facial and trigeminal motoneurons (PubMed:19864576). At behavioral level, they exhibit a task-dependent increase in locomotion and exploration and reduced anxiety-related behaviors across tests (PubMed:28081177). Their spatial working memory and social behaviors are not affected. They form an increased association with conditioned stimulus in fear conditioning testing and also display significantly improved prepulse inhibition (PubMed:28081177). Mutant mice show reduced effect of metformin drug on appetite reduction and weight loss (PubMed:31875646, PubMed:32694673). Anorexia and weight loss induced by anticancer drugs, such as cisplatin, are attenuated in mutant mice (PubMed:33207247). Diurnal anorexia and weight loss induced by mitochondrial stress is reduced in mutant mice (PubMed:32026535). Higher mortality following myocardial infarction due to enhanced myeloid cell recruitment (PubMed:21516086).</text>
</comment>
<comment type="miscellaneous">
    <text evidence="15 35">Gdf15 treatment is efficient to reduce obesity and promote weight loss in mouse (PubMed:29026214). Administration of Gdf15 reduces the adiposity and corrects the metabolic dysfunction of mice with diet-induced obesity (PubMed:29026214). The combined administration of Gdf15 and leptin (Lep) leads to significantly greater weight and adiposity loss than either treatment alone, indicating potentiation between Gdf15 and Lep (PubMed:37433299).</text>
</comment>
<comment type="similarity">
    <text evidence="42">Belongs to the TGF-beta family.</text>
</comment>
<evidence type="ECO:0000250" key="1">
    <source>
        <dbReference type="UniProtKB" id="Q99988"/>
    </source>
</evidence>
<evidence type="ECO:0000255" key="2"/>
<evidence type="ECO:0000269" key="3">
    <source>
    </source>
</evidence>
<evidence type="ECO:0000269" key="4">
    <source>
    </source>
</evidence>
<evidence type="ECO:0000269" key="5">
    <source>
    </source>
</evidence>
<evidence type="ECO:0000269" key="6">
    <source>
    </source>
</evidence>
<evidence type="ECO:0000269" key="7">
    <source>
    </source>
</evidence>
<evidence type="ECO:0000269" key="8">
    <source>
    </source>
</evidence>
<evidence type="ECO:0000269" key="9">
    <source>
    </source>
</evidence>
<evidence type="ECO:0000269" key="10">
    <source>
    </source>
</evidence>
<evidence type="ECO:0000269" key="11">
    <source>
    </source>
</evidence>
<evidence type="ECO:0000269" key="12">
    <source>
    </source>
</evidence>
<evidence type="ECO:0000269" key="13">
    <source>
    </source>
</evidence>
<evidence type="ECO:0000269" key="14">
    <source>
    </source>
</evidence>
<evidence type="ECO:0000269" key="15">
    <source>
    </source>
</evidence>
<evidence type="ECO:0000269" key="16">
    <source>
    </source>
</evidence>
<evidence type="ECO:0000269" key="17">
    <source>
    </source>
</evidence>
<evidence type="ECO:0000269" key="18">
    <source>
    </source>
</evidence>
<evidence type="ECO:0000269" key="19">
    <source>
    </source>
</evidence>
<evidence type="ECO:0000269" key="20">
    <source>
    </source>
</evidence>
<evidence type="ECO:0000269" key="21">
    <source>
    </source>
</evidence>
<evidence type="ECO:0000269" key="22">
    <source>
    </source>
</evidence>
<evidence type="ECO:0000269" key="23">
    <source>
    </source>
</evidence>
<evidence type="ECO:0000269" key="24">
    <source>
    </source>
</evidence>
<evidence type="ECO:0000269" key="25">
    <source>
    </source>
</evidence>
<evidence type="ECO:0000269" key="26">
    <source>
    </source>
</evidence>
<evidence type="ECO:0000269" key="27">
    <source>
    </source>
</evidence>
<evidence type="ECO:0000269" key="28">
    <source>
    </source>
</evidence>
<evidence type="ECO:0000269" key="29">
    <source>
    </source>
</evidence>
<evidence type="ECO:0000269" key="30">
    <source>
    </source>
</evidence>
<evidence type="ECO:0000269" key="31">
    <source>
    </source>
</evidence>
<evidence type="ECO:0000269" key="32">
    <source>
    </source>
</evidence>
<evidence type="ECO:0000269" key="33">
    <source>
    </source>
</evidence>
<evidence type="ECO:0000269" key="34">
    <source>
    </source>
</evidence>
<evidence type="ECO:0000269" key="35">
    <source>
    </source>
</evidence>
<evidence type="ECO:0000269" key="36">
    <source>
    </source>
</evidence>
<evidence type="ECO:0000269" key="37">
    <source>
    </source>
</evidence>
<evidence type="ECO:0000269" key="38">
    <source>
    </source>
</evidence>
<evidence type="ECO:0000303" key="39">
    <source>
    </source>
</evidence>
<evidence type="ECO:0000303" key="40">
    <source>
    </source>
</evidence>
<evidence type="ECO:0000303" key="41">
    <source>
    </source>
</evidence>
<evidence type="ECO:0000305" key="42"/>
<evidence type="ECO:0000312" key="43">
    <source>
        <dbReference type="MGI" id="MGI:1346047"/>
    </source>
</evidence>
<reference key="1">
    <citation type="submission" date="1998-10" db="EMBL/GenBank/DDBJ databases">
        <title>Identification of a novel member of the TGFbeta superfamily.</title>
        <authorList>
            <person name="Boettner M."/>
            <person name="Laaff M."/>
            <person name="Suter-Crazzolara C."/>
        </authorList>
    </citation>
    <scope>NUCLEOTIDE SEQUENCE [GENOMIC DNA]</scope>
    <source>
        <strain>129/SvJ</strain>
    </source>
</reference>
<reference key="2">
    <citation type="journal article" date="2000" name="Mol. Cell. Biol.">
        <title>Characterization of growth-differentiation factor 15, a transforming growth factor beta superfamily member induced following liver injury.</title>
        <authorList>
            <person name="Hsiao E.C."/>
            <person name="Koniaris L.G."/>
            <person name="Zimmers-Koniaris T."/>
            <person name="Sebald S.M."/>
            <person name="Huynh T.V."/>
            <person name="Lee S.-J."/>
        </authorList>
    </citation>
    <scope>NUCLEOTIDE SEQUENCE [MRNA]</scope>
    <scope>TISSUE SPECIFICITY</scope>
</reference>
<reference key="3">
    <citation type="journal article" date="2005" name="Science">
        <title>The transcriptional landscape of the mammalian genome.</title>
        <authorList>
            <person name="Carninci P."/>
            <person name="Kasukawa T."/>
            <person name="Katayama S."/>
            <person name="Gough J."/>
            <person name="Frith M.C."/>
            <person name="Maeda N."/>
            <person name="Oyama R."/>
            <person name="Ravasi T."/>
            <person name="Lenhard B."/>
            <person name="Wells C."/>
            <person name="Kodzius R."/>
            <person name="Shimokawa K."/>
            <person name="Bajic V.B."/>
            <person name="Brenner S.E."/>
            <person name="Batalov S."/>
            <person name="Forrest A.R."/>
            <person name="Zavolan M."/>
            <person name="Davis M.J."/>
            <person name="Wilming L.G."/>
            <person name="Aidinis V."/>
            <person name="Allen J.E."/>
            <person name="Ambesi-Impiombato A."/>
            <person name="Apweiler R."/>
            <person name="Aturaliya R.N."/>
            <person name="Bailey T.L."/>
            <person name="Bansal M."/>
            <person name="Baxter L."/>
            <person name="Beisel K.W."/>
            <person name="Bersano T."/>
            <person name="Bono H."/>
            <person name="Chalk A.M."/>
            <person name="Chiu K.P."/>
            <person name="Choudhary V."/>
            <person name="Christoffels A."/>
            <person name="Clutterbuck D.R."/>
            <person name="Crowe M.L."/>
            <person name="Dalla E."/>
            <person name="Dalrymple B.P."/>
            <person name="de Bono B."/>
            <person name="Della Gatta G."/>
            <person name="di Bernardo D."/>
            <person name="Down T."/>
            <person name="Engstrom P."/>
            <person name="Fagiolini M."/>
            <person name="Faulkner G."/>
            <person name="Fletcher C.F."/>
            <person name="Fukushima T."/>
            <person name="Furuno M."/>
            <person name="Futaki S."/>
            <person name="Gariboldi M."/>
            <person name="Georgii-Hemming P."/>
            <person name="Gingeras T.R."/>
            <person name="Gojobori T."/>
            <person name="Green R.E."/>
            <person name="Gustincich S."/>
            <person name="Harbers M."/>
            <person name="Hayashi Y."/>
            <person name="Hensch T.K."/>
            <person name="Hirokawa N."/>
            <person name="Hill D."/>
            <person name="Huminiecki L."/>
            <person name="Iacono M."/>
            <person name="Ikeo K."/>
            <person name="Iwama A."/>
            <person name="Ishikawa T."/>
            <person name="Jakt M."/>
            <person name="Kanapin A."/>
            <person name="Katoh M."/>
            <person name="Kawasawa Y."/>
            <person name="Kelso J."/>
            <person name="Kitamura H."/>
            <person name="Kitano H."/>
            <person name="Kollias G."/>
            <person name="Krishnan S.P."/>
            <person name="Kruger A."/>
            <person name="Kummerfeld S.K."/>
            <person name="Kurochkin I.V."/>
            <person name="Lareau L.F."/>
            <person name="Lazarevic D."/>
            <person name="Lipovich L."/>
            <person name="Liu J."/>
            <person name="Liuni S."/>
            <person name="McWilliam S."/>
            <person name="Madan Babu M."/>
            <person name="Madera M."/>
            <person name="Marchionni L."/>
            <person name="Matsuda H."/>
            <person name="Matsuzawa S."/>
            <person name="Miki H."/>
            <person name="Mignone F."/>
            <person name="Miyake S."/>
            <person name="Morris K."/>
            <person name="Mottagui-Tabar S."/>
            <person name="Mulder N."/>
            <person name="Nakano N."/>
            <person name="Nakauchi H."/>
            <person name="Ng P."/>
            <person name="Nilsson R."/>
            <person name="Nishiguchi S."/>
            <person name="Nishikawa S."/>
            <person name="Nori F."/>
            <person name="Ohara O."/>
            <person name="Okazaki Y."/>
            <person name="Orlando V."/>
            <person name="Pang K.C."/>
            <person name="Pavan W.J."/>
            <person name="Pavesi G."/>
            <person name="Pesole G."/>
            <person name="Petrovsky N."/>
            <person name="Piazza S."/>
            <person name="Reed J."/>
            <person name="Reid J.F."/>
            <person name="Ring B.Z."/>
            <person name="Ringwald M."/>
            <person name="Rost B."/>
            <person name="Ruan Y."/>
            <person name="Salzberg S.L."/>
            <person name="Sandelin A."/>
            <person name="Schneider C."/>
            <person name="Schoenbach C."/>
            <person name="Sekiguchi K."/>
            <person name="Semple C.A."/>
            <person name="Seno S."/>
            <person name="Sessa L."/>
            <person name="Sheng Y."/>
            <person name="Shibata Y."/>
            <person name="Shimada H."/>
            <person name="Shimada K."/>
            <person name="Silva D."/>
            <person name="Sinclair B."/>
            <person name="Sperling S."/>
            <person name="Stupka E."/>
            <person name="Sugiura K."/>
            <person name="Sultana R."/>
            <person name="Takenaka Y."/>
            <person name="Taki K."/>
            <person name="Tammoja K."/>
            <person name="Tan S.L."/>
            <person name="Tang S."/>
            <person name="Taylor M.S."/>
            <person name="Tegner J."/>
            <person name="Teichmann S.A."/>
            <person name="Ueda H.R."/>
            <person name="van Nimwegen E."/>
            <person name="Verardo R."/>
            <person name="Wei C.L."/>
            <person name="Yagi K."/>
            <person name="Yamanishi H."/>
            <person name="Zabarovsky E."/>
            <person name="Zhu S."/>
            <person name="Zimmer A."/>
            <person name="Hide W."/>
            <person name="Bult C."/>
            <person name="Grimmond S.M."/>
            <person name="Teasdale R.D."/>
            <person name="Liu E.T."/>
            <person name="Brusic V."/>
            <person name="Quackenbush J."/>
            <person name="Wahlestedt C."/>
            <person name="Mattick J.S."/>
            <person name="Hume D.A."/>
            <person name="Kai C."/>
            <person name="Sasaki D."/>
            <person name="Tomaru Y."/>
            <person name="Fukuda S."/>
            <person name="Kanamori-Katayama M."/>
            <person name="Suzuki M."/>
            <person name="Aoki J."/>
            <person name="Arakawa T."/>
            <person name="Iida J."/>
            <person name="Imamura K."/>
            <person name="Itoh M."/>
            <person name="Kato T."/>
            <person name="Kawaji H."/>
            <person name="Kawagashira N."/>
            <person name="Kawashima T."/>
            <person name="Kojima M."/>
            <person name="Kondo S."/>
            <person name="Konno H."/>
            <person name="Nakano K."/>
            <person name="Ninomiya N."/>
            <person name="Nishio T."/>
            <person name="Okada M."/>
            <person name="Plessy C."/>
            <person name="Shibata K."/>
            <person name="Shiraki T."/>
            <person name="Suzuki S."/>
            <person name="Tagami M."/>
            <person name="Waki K."/>
            <person name="Watahiki A."/>
            <person name="Okamura-Oho Y."/>
            <person name="Suzuki H."/>
            <person name="Kawai J."/>
            <person name="Hayashizaki Y."/>
        </authorList>
    </citation>
    <scope>NUCLEOTIDE SEQUENCE [LARGE SCALE MRNA]</scope>
    <source>
        <strain>C57BL/6J</strain>
    </source>
</reference>
<reference key="4">
    <citation type="journal article" date="2009" name="PLoS Biol.">
        <title>Lineage-specific biology revealed by a finished genome assembly of the mouse.</title>
        <authorList>
            <person name="Church D.M."/>
            <person name="Goodstadt L."/>
            <person name="Hillier L.W."/>
            <person name="Zody M.C."/>
            <person name="Goldstein S."/>
            <person name="She X."/>
            <person name="Bult C.J."/>
            <person name="Agarwala R."/>
            <person name="Cherry J.L."/>
            <person name="DiCuccio M."/>
            <person name="Hlavina W."/>
            <person name="Kapustin Y."/>
            <person name="Meric P."/>
            <person name="Maglott D."/>
            <person name="Birtle Z."/>
            <person name="Marques A.C."/>
            <person name="Graves T."/>
            <person name="Zhou S."/>
            <person name="Teague B."/>
            <person name="Potamousis K."/>
            <person name="Churas C."/>
            <person name="Place M."/>
            <person name="Herschleb J."/>
            <person name="Runnheim R."/>
            <person name="Forrest D."/>
            <person name="Amos-Landgraf J."/>
            <person name="Schwartz D.C."/>
            <person name="Cheng Z."/>
            <person name="Lindblad-Toh K."/>
            <person name="Eichler E.E."/>
            <person name="Ponting C.P."/>
        </authorList>
    </citation>
    <scope>NUCLEOTIDE SEQUENCE [LARGE SCALE GENOMIC DNA]</scope>
    <source>
        <strain>C57BL/6J</strain>
    </source>
</reference>
<reference key="5">
    <citation type="submission" date="2005-07" db="EMBL/GenBank/DDBJ databases">
        <authorList>
            <person name="Mural R.J."/>
            <person name="Adams M.D."/>
            <person name="Myers E.W."/>
            <person name="Smith H.O."/>
            <person name="Venter J.C."/>
        </authorList>
    </citation>
    <scope>NUCLEOTIDE SEQUENCE [LARGE SCALE GENOMIC DNA]</scope>
</reference>
<reference key="6">
    <citation type="journal article" date="2004" name="Genome Res.">
        <title>The status, quality, and expansion of the NIH full-length cDNA project: the Mammalian Gene Collection (MGC).</title>
        <authorList>
            <consortium name="The MGC Project Team"/>
        </authorList>
    </citation>
    <scope>NUCLEOTIDE SEQUENCE [LARGE SCALE MRNA]</scope>
    <source>
        <strain>C57BL/6J</strain>
        <tissue>Mammary gland</tissue>
    </source>
</reference>
<reference key="7">
    <citation type="journal article" date="2007" name="Nat. Med.">
        <title>Tumor-induced anorexia and weight loss are mediated by the TGF-beta superfamily cytokine MIC-1.</title>
        <authorList>
            <person name="Johnen H."/>
            <person name="Lin S."/>
            <person name="Kuffner T."/>
            <person name="Brown D.A."/>
            <person name="Tsai V.W."/>
            <person name="Bauskin A.R."/>
            <person name="Wu L."/>
            <person name="Pankhurst G."/>
            <person name="Jiang L."/>
            <person name="Junankar S."/>
            <person name="Hunter M."/>
            <person name="Fairlie W.D."/>
            <person name="Lee N.J."/>
            <person name="Enriquez R.F."/>
            <person name="Baldock P.A."/>
            <person name="Corey E."/>
            <person name="Apple F.S."/>
            <person name="Murakami M.M."/>
            <person name="Lin E.J."/>
            <person name="Wang C."/>
            <person name="During M.J."/>
            <person name="Sainsbury A."/>
            <person name="Herzog H."/>
            <person name="Breit S.N."/>
        </authorList>
    </citation>
    <scope>FUNCTION</scope>
</reference>
<reference key="8">
    <citation type="journal article" date="2009" name="J. Neurosci.">
        <title>Progressive postnatal motoneuron loss in mice lacking GDF-15.</title>
        <authorList>
            <person name="Strelau J."/>
            <person name="Strzelczyk A."/>
            <person name="Rusu P."/>
            <person name="Bendner G."/>
            <person name="Wiese S."/>
            <person name="Diella F."/>
            <person name="Altick A.L."/>
            <person name="von Bartheld C.S."/>
            <person name="Klein R."/>
            <person name="Sendtner M."/>
            <person name="Unsicker K."/>
        </authorList>
    </citation>
    <scope>DISRUPTION PHENOTYPE</scope>
</reference>
<reference key="9">
    <citation type="journal article" date="2011" name="Nat. Med.">
        <title>GDF-15 is an inhibitor of leukocyte integrin activation required for survival after myocardial infarction in mice.</title>
        <authorList>
            <person name="Kempf T."/>
            <person name="Zarbock A."/>
            <person name="Widera C."/>
            <person name="Butz S."/>
            <person name="Stadtmann A."/>
            <person name="Rossaint J."/>
            <person name="Bolomini-Vittori M."/>
            <person name="Korf-Klingebiel M."/>
            <person name="Napp L.C."/>
            <person name="Hansen B."/>
            <person name="Kanwischer A."/>
            <person name="Bavendiek U."/>
            <person name="Beutel G."/>
            <person name="Hapke M."/>
            <person name="Sauer M.G."/>
            <person name="Laudanna C."/>
            <person name="Hogg N."/>
            <person name="Vestweber D."/>
            <person name="Wollert K.C."/>
        </authorList>
    </citation>
    <scope>FUNCTION</scope>
    <scope>INDUCTION</scope>
    <scope>DISRUPTION PHENOTYPE</scope>
</reference>
<reference key="10">
    <citation type="journal article" date="2013" name="PLoS ONE">
        <title>TGF-b superfamily cytokine MIC-1/GDF15 is a physiological appetite and body weight regulator.</title>
        <authorList>
            <person name="Tsai V.W."/>
            <person name="Macia L."/>
            <person name="Johnen H."/>
            <person name="Kuffner T."/>
            <person name="Manadhar R."/>
            <person name="Joergensen S.B."/>
            <person name="Lee-Ng K.K."/>
            <person name="Zhang H.P."/>
            <person name="Wu L."/>
            <person name="Marquis C.P."/>
            <person name="Jiang L."/>
            <person name="Husaini Y."/>
            <person name="Lin S."/>
            <person name="Herzog H."/>
            <person name="Brown D.A."/>
            <person name="Sainsbury A."/>
            <person name="Breit S.N."/>
        </authorList>
    </citation>
    <scope>FUNCTION</scope>
    <scope>DISRUPTION PHENOTYPE</scope>
</reference>
<reference key="11">
    <citation type="journal article" date="2017" name="EMBO Mol. Med.">
        <title>GDF15 is a heart-derived hormone that regulates body growth.</title>
        <authorList>
            <person name="Wang T."/>
            <person name="Liu J."/>
            <person name="McDonald C."/>
            <person name="Lupino K."/>
            <person name="Zhai X."/>
            <person name="Wilkins B.J."/>
            <person name="Hakonarson H."/>
            <person name="Pei L."/>
        </authorList>
    </citation>
    <scope>FUNCTION</scope>
    <scope>TISSUE SPECIFICITY</scope>
    <scope>DEVELOPMENTAL STAGE</scope>
    <scope>SUBCELLULAR LOCATION</scope>
</reference>
<reference key="12">
    <citation type="journal article" date="2017" name="Nature">
        <title>Non-homeostatic body weight regulation through a brainstem-restricted receptor for GDF15.</title>
        <authorList>
            <person name="Hsu J.Y."/>
            <person name="Crawley S."/>
            <person name="Chen M."/>
            <person name="Ayupova D.A."/>
            <person name="Lindhout D.A."/>
            <person name="Higbee J."/>
            <person name="Kutach A."/>
            <person name="Joo W."/>
            <person name="Gao Z."/>
            <person name="Fu D."/>
            <person name="To C."/>
            <person name="Mondal K."/>
            <person name="Li B."/>
            <person name="Kekatpure A."/>
            <person name="Wang M."/>
            <person name="Laird T."/>
            <person name="Horner G."/>
            <person name="Chan J."/>
            <person name="McEntee M."/>
            <person name="Lopez M."/>
            <person name="Lakshminarasimhan D."/>
            <person name="White A."/>
            <person name="Wang S.P."/>
            <person name="Yao J."/>
            <person name="Yie J."/>
            <person name="Matern H."/>
            <person name="Solloway M."/>
            <person name="Haldankar R."/>
            <person name="Parsons T."/>
            <person name="Tang J."/>
            <person name="Shen W.D."/>
            <person name="Alice Chen Y."/>
            <person name="Tian H."/>
            <person name="Allan B.B."/>
        </authorList>
    </citation>
    <scope>FUNCTION</scope>
</reference>
<reference key="13">
    <citation type="journal article" date="2017" name="Nature">
        <title>Non-homeostatic body weight regulation through a brainstem-restricted receptor for GDF15.</title>
        <authorList>
            <person name="Hsu J.Y."/>
            <person name="Crawley S."/>
            <person name="Chen M."/>
            <person name="Ayupova D.A."/>
            <person name="Lindhout D.A."/>
            <person name="Higbee J."/>
            <person name="Kutach A."/>
            <person name="Joo W."/>
            <person name="Gao Z."/>
            <person name="Fu D."/>
            <person name="To C."/>
            <person name="Mondal K."/>
            <person name="Li B."/>
            <person name="Kekatpure A."/>
            <person name="Wang M."/>
            <person name="Laird T."/>
            <person name="Horner G."/>
            <person name="Chan J."/>
            <person name="McEntee M."/>
            <person name="Lopez M."/>
            <person name="Lakshminarasimhan D."/>
            <person name="White A."/>
            <person name="Wang S.P."/>
            <person name="Yao J."/>
            <person name="Yie J."/>
            <person name="Matern H."/>
            <person name="Solloway M."/>
            <person name="Haldankar R."/>
            <person name="Parsons T."/>
            <person name="Tang J."/>
            <person name="Shen W.D."/>
            <person name="Alice Chen Y."/>
            <person name="Tian H."/>
            <person name="Allan B.B."/>
        </authorList>
    </citation>
    <scope>ERRATUM OF PUBMED:28953886</scope>
</reference>
<reference key="14">
    <citation type="journal article" date="2017" name="Nat. Med.">
        <title>GFRAL is the receptor for GDF15 and the ligand promotes weight loss in mice and nonhuman primates.</title>
        <authorList>
            <person name="Mullican S.E."/>
            <person name="Lin-Schmidt X."/>
            <person name="Chin C.N."/>
            <person name="Chavez J.A."/>
            <person name="Furman J.L."/>
            <person name="Armstrong A.A."/>
            <person name="Beck S.C."/>
            <person name="South V.J."/>
            <person name="Dinh T.Q."/>
            <person name="Cash-Mason T.D."/>
            <person name="Cavanaugh C.R."/>
            <person name="Nelson S."/>
            <person name="Huang C."/>
            <person name="Hunter M.J."/>
            <person name="Rangwala S.M."/>
        </authorList>
    </citation>
    <scope>FUNCTION</scope>
</reference>
<reference key="15">
    <citation type="journal article" date="2017" name="Nat. Med.">
        <title>GFRAL is the receptor for GDF15 and is required for the anti-obesity effects of the ligand.</title>
        <authorList>
            <person name="Yang L."/>
            <person name="Chang C.C."/>
            <person name="Sun Z."/>
            <person name="Madsen D."/>
            <person name="Zhu H."/>
            <person name="Padkjaer S.B."/>
            <person name="Wu X."/>
            <person name="Huang T."/>
            <person name="Hultman K."/>
            <person name="Paulsen S.J."/>
            <person name="Wang J."/>
            <person name="Bugge A."/>
            <person name="Frantzen J.B."/>
            <person name="Noergaard P."/>
            <person name="Jeppesen J.F."/>
            <person name="Yang Z."/>
            <person name="Secher A."/>
            <person name="Chen H."/>
            <person name="Li X."/>
            <person name="John L.M."/>
            <person name="Shan B."/>
            <person name="He Z."/>
            <person name="Gao X."/>
            <person name="Su J."/>
            <person name="Hansen K.T."/>
            <person name="Yang W."/>
            <person name="Joergensen S.B."/>
        </authorList>
    </citation>
    <scope>FUNCTION</scope>
    <scope>INTERACTION WITH GFRAL</scope>
</reference>
<reference key="16">
    <citation type="journal article" date="2017" name="Nat. Med.">
        <title>The metabolic effects of GDF15 are mediated by the orphan receptor GFRAL.</title>
        <authorList>
            <person name="Emmerson P.J."/>
            <person name="Wang F."/>
            <person name="Du Y."/>
            <person name="Liu Q."/>
            <person name="Pickard R.T."/>
            <person name="Gonciarz M.D."/>
            <person name="Coskun T."/>
            <person name="Hamang M.J."/>
            <person name="Sindelar D.K."/>
            <person name="Ballman K.K."/>
            <person name="Foltz L.A."/>
            <person name="Muppidi A."/>
            <person name="Alsina-Fernandez J."/>
            <person name="Barnard G.C."/>
            <person name="Tang J.X."/>
            <person name="Liu X."/>
            <person name="Mao X."/>
            <person name="Siegel R."/>
            <person name="Sloan J.H."/>
            <person name="Mitchell P.J."/>
            <person name="Zhang B.B."/>
            <person name="Gimeno R.E."/>
            <person name="Shan B."/>
            <person name="Wu X."/>
        </authorList>
    </citation>
    <scope>FUNCTION</scope>
    <scope>INTERACTION WITH GFRAL</scope>
</reference>
<reference key="17">
    <citation type="journal article" date="2017" name="PLoS ONE">
        <title>First behavioral Characterisation of a Knockout Mouse Model for the Transforming Growth Factor (TGF)-beta Superfamily Cytokine, MIC-1/GDF15.</title>
        <authorList>
            <person name="Low J.K."/>
            <person name="Ambikairajah A."/>
            <person name="Shang K."/>
            <person name="Brown D.A."/>
            <person name="Tsai V.W."/>
            <person name="Breit S.N."/>
            <person name="Karl T."/>
        </authorList>
    </citation>
    <scope>DISRUPTION PHENOTYPE</scope>
</reference>
<reference key="18">
    <citation type="journal article" date="2017" name="J. Cell Biol.">
        <title>Growth differentiation factor 15 is a myomitokine governing systemic energy homeostasis.</title>
        <authorList>
            <person name="Chung H.K."/>
            <person name="Ryu D."/>
            <person name="Kim K.S."/>
            <person name="Chang J.Y."/>
            <person name="Kim Y.K."/>
            <person name="Yi H.S."/>
            <person name="Kang S.G."/>
            <person name="Choi M.J."/>
            <person name="Lee S.E."/>
            <person name="Jung S.B."/>
            <person name="Ryu M.J."/>
            <person name="Kim S.J."/>
            <person name="Kweon G.R."/>
            <person name="Kim H."/>
            <person name="Hwang J.H."/>
            <person name="Lee C.H."/>
            <person name="Lee S.J."/>
            <person name="Wall C.E."/>
            <person name="Downes M."/>
            <person name="Evans R.M."/>
            <person name="Auwerx J."/>
            <person name="Shong M."/>
        </authorList>
    </citation>
    <scope>FUNCTION</scope>
    <scope>TISSUE SPECIFICITY</scope>
    <scope>INDUCTION</scope>
</reference>
<reference key="19">
    <citation type="journal article" date="2017" name="Sci. Transl. Med.">
        <title>Long-acting MIC-1/GDF15 molecules to treat obesity: Evidence from mice to monkeys.</title>
        <authorList>
            <person name="Xiong Y."/>
            <person name="Walker K."/>
            <person name="Min X."/>
            <person name="Hale C."/>
            <person name="Tran T."/>
            <person name="Komorowski R."/>
            <person name="Yang J."/>
            <person name="Davda J."/>
            <person name="Nuanmanee N."/>
            <person name="Kemp D."/>
            <person name="Wang X."/>
            <person name="Liu H."/>
            <person name="Miller S."/>
            <person name="Lee K.J."/>
            <person name="Wang Z."/>
            <person name="Veniant M.M."/>
        </authorList>
    </citation>
    <scope>INDUCTION BY OBESITY</scope>
    <scope>TISSUE SPECIFICITY</scope>
    <scope>SUBCELLULAR LOCATION</scope>
    <scope>FUNCTION</scope>
</reference>
<reference key="20">
    <citation type="journal article" date="2018" name="Int. J. Obes. Relat. Metab. Disord.">
        <title>Treatment with the TGF-b superfamily cytokine MIC-1/GDF15 reduces the adiposity and corrects the metabolic dysfunction of mice with diet-induced obesity.</title>
        <authorList>
            <person name="Tsai V.W."/>
            <person name="Zhang H.P."/>
            <person name="Manandhar R."/>
            <person name="Lee-Ng K.K.M."/>
            <person name="Lebhar H."/>
            <person name="Marquis C.P."/>
            <person name="Husaini Y."/>
            <person name="Sainsbury A."/>
            <person name="Brown D.A."/>
            <person name="Breit S.N."/>
        </authorList>
    </citation>
    <scope>FUNCTION</scope>
</reference>
<reference key="21">
    <citation type="journal article" date="2018" name="PLoS ONE">
        <title>GDF15 deficiency promotes high fat diet-induced obesity in mice.</title>
        <authorList>
            <person name="Tran T."/>
            <person name="Yang J."/>
            <person name="Gardner J."/>
            <person name="Xiong Y."/>
        </authorList>
    </citation>
    <scope>DISRUPTION PHENOTYPE</scope>
</reference>
<reference key="22">
    <citation type="journal article" date="2019" name="Cell Metab.">
        <title>GDF15 provides an endocrine signal of nutritional stress in mice and humans.</title>
        <authorList>
            <person name="Patel S."/>
            <person name="Alvarez-Guaita A."/>
            <person name="Melvin A."/>
            <person name="Rimmington D."/>
            <person name="Dattilo A."/>
            <person name="Miedzybrodzka E.L."/>
            <person name="Cimino I."/>
            <person name="Maurin A.C."/>
            <person name="Roberts G.P."/>
            <person name="Meek C.L."/>
            <person name="Virtue S."/>
            <person name="Sparks L.M."/>
            <person name="Parsons S.A."/>
            <person name="Redman L.M."/>
            <person name="Bray G.A."/>
            <person name="Liou A.P."/>
            <person name="Woods R.M."/>
            <person name="Parry S.A."/>
            <person name="Jeppesen P.B."/>
            <person name="Kolnes A.J."/>
            <person name="Harding H.P."/>
            <person name="Ron D."/>
            <person name="Vidal-Puig A."/>
            <person name="Reimann F."/>
            <person name="Gribble F.M."/>
            <person name="Hulston C.J."/>
            <person name="Farooqi I.S."/>
            <person name="Fafournoux P."/>
            <person name="Smith S.R."/>
            <person name="Jensen J."/>
            <person name="Breen D."/>
            <person name="Wu Z."/>
            <person name="Zhang B.B."/>
            <person name="Coll A.P."/>
            <person name="Savage D.B."/>
            <person name="O'Rahilly S."/>
        </authorList>
    </citation>
    <scope>FUNCTION</scope>
    <scope>INDUCTION</scope>
</reference>
<reference key="23">
    <citation type="journal article" date="2019" name="Int. J. Obes. Relat. Metab. Disord.">
        <title>GDF15 mediates adiposity resistance through actions on GFRAL neurons in the hindbrain AP/NTS.</title>
        <authorList>
            <person name="Tsai V.W."/>
            <person name="Zhang H.P."/>
            <person name="Manandhar R."/>
            <person name="Schofield P."/>
            <person name="Christ D."/>
            <person name="Lee-Ng K.K.M."/>
            <person name="Lebhar H."/>
            <person name="Marquis C.P."/>
            <person name="Husaini Y."/>
            <person name="Brown D.A."/>
            <person name="Breit S.N."/>
        </authorList>
    </citation>
    <scope>FUNCTION</scope>
</reference>
<reference key="24">
    <citation type="journal article" date="2019" name="Nat. Metab.">
        <title>Metformin-induced increases in GDF15 are important for suppressing appetite and promoting weight loss.</title>
        <authorList>
            <person name="Day E.A."/>
            <person name="Ford R.J."/>
            <person name="Smith B.K."/>
            <person name="Mohammadi-Shemirani P."/>
            <person name="Morrow M.R."/>
            <person name="Gutgesell R.M."/>
            <person name="Lu R."/>
            <person name="Raphenya A.R."/>
            <person name="Kabiri M."/>
            <person name="McArthur A.G."/>
            <person name="McInnes N."/>
            <person name="Hess S."/>
            <person name="Pare G."/>
            <person name="Gerstein H.C."/>
            <person name="Steinberg G.R."/>
        </authorList>
    </citation>
    <scope>FUNCTION</scope>
    <scope>SUBCELLULAR LOCATION</scope>
    <scope>INDUCTION</scope>
    <scope>DISRUPTION PHENOTYPE</scope>
</reference>
<reference key="25">
    <citation type="journal article" date="2020" name="Cell Metab.">
        <title>GDF15 induces anorexia through nausea and emesis.</title>
        <authorList>
            <person name="Borner T."/>
            <person name="Shaulson E.D."/>
            <person name="Ghidewon M.Y."/>
            <person name="Barnett A.B."/>
            <person name="Horn C.C."/>
            <person name="Doyle R.P."/>
            <person name="Grill H.J."/>
            <person name="Hayes M.R."/>
            <person name="De Jonghe B.C."/>
        </authorList>
    </citation>
    <scope>FUNCTION</scope>
    <scope>INDUCTION</scope>
</reference>
<reference key="26">
    <citation type="journal article" date="2020" name="Cell Metab.">
        <title>GDF-15 neutralization alleviates platinum-based chemotherapy-induced emesis, anorexia, and weight loss in mice and nonhuman primates.</title>
        <authorList>
            <person name="Breen D.M."/>
            <person name="Kim H."/>
            <person name="Bennett D."/>
            <person name="Calle R.A."/>
            <person name="Collins S."/>
            <person name="Esquejo R.M."/>
            <person name="He T."/>
            <person name="Joaquim S."/>
            <person name="Joyce A."/>
            <person name="Lambert M."/>
            <person name="Lin L."/>
            <person name="Pettersen B."/>
            <person name="Qiao S."/>
            <person name="Rossulek M."/>
            <person name="Weber G."/>
            <person name="Wu Z."/>
            <person name="Zhang B.B."/>
            <person name="Birnbaum M.J."/>
        </authorList>
    </citation>
    <scope>FUNCTION</scope>
    <scope>DISRUPTION PHENOTYPE</scope>
    <scope>INDUCTION</scope>
</reference>
<reference key="27">
    <citation type="journal article" date="2020" name="Elife">
        <title>The cytokine GDF15 signals through a population of brainstem cholecystokinin neurons to mediate anorectic signalling.</title>
        <authorList>
            <person name="Worth A.A."/>
            <person name="Shoop R."/>
            <person name="Tye K."/>
            <person name="Feetham C.H."/>
            <person name="D'Agostino G."/>
            <person name="Dodd G.T."/>
            <person name="Reimann F."/>
            <person name="Gribble F.M."/>
            <person name="Beebe E.C."/>
            <person name="Dunbar J.D."/>
            <person name="Alexander-Chacko J.T."/>
            <person name="Sindelar D.K."/>
            <person name="Coskun T."/>
            <person name="Emmerson P.J."/>
            <person name="Luckman S.M."/>
        </authorList>
    </citation>
    <scope>FUNCTION</scope>
    <scope>INDUCTION</scope>
</reference>
<reference key="28">
    <citation type="journal article" date="2020" name="EMBO Rep.">
        <title>Muscle-derived GDF15 drives diurnal anorexia and systemic metabolic remodeling during mitochondrial stress.</title>
        <authorList>
            <person name="Ost M."/>
            <person name="Igual Gil C."/>
            <person name="Coleman V."/>
            <person name="Keipert S."/>
            <person name="Efstathiou S."/>
            <person name="Vidic V."/>
            <person name="Weyers M."/>
            <person name="Klaus S."/>
        </authorList>
    </citation>
    <scope>FUNCTION</scope>
    <scope>DISRUPTION PHENOTYPE</scope>
    <scope>TISSUE SPECIFICITY</scope>
    <scope>INDUCTION</scope>
</reference>
<reference key="29">
    <citation type="journal article" date="2020" name="Nature">
        <title>GDF15 mediates the effects of metformin on body weight and energy balance.</title>
        <authorList>
            <person name="Coll A.P."/>
            <person name="Chen M."/>
            <person name="Taskar P."/>
            <person name="Rimmington D."/>
            <person name="Patel S."/>
            <person name="Tadross J.A."/>
            <person name="Cimino I."/>
            <person name="Yang M."/>
            <person name="Welsh P."/>
            <person name="Virtue S."/>
            <person name="Goldspink D.A."/>
            <person name="Miedzybrodzka E.L."/>
            <person name="Konopka A.R."/>
            <person name="Esponda R.R."/>
            <person name="Huang J.T."/>
            <person name="Tung Y.C.L."/>
            <person name="Rodriguez-Cuenca S."/>
            <person name="Tomaz R.A."/>
            <person name="Harding H.P."/>
            <person name="Melvin A."/>
            <person name="Yeo G.S.H."/>
            <person name="Preiss D."/>
            <person name="Vidal-Puig A."/>
            <person name="Vallier L."/>
            <person name="Nair K.S."/>
            <person name="Wareham N.J."/>
            <person name="Ron D."/>
            <person name="Gribble F.M."/>
            <person name="Reimann F."/>
            <person name="Sattar N."/>
            <person name="Savage D.B."/>
            <person name="Allan B.B."/>
            <person name="O'Rahilly S."/>
        </authorList>
    </citation>
    <scope>FUNCTION</scope>
    <scope>SUBCELLULAR LOCATION</scope>
    <scope>DISRUPTION PHENOTYPE</scope>
    <scope>TISSUE SPECIFICITY</scope>
    <scope>INDUCTION</scope>
</reference>
<reference key="30">
    <citation type="journal article" date="2020" name="Nat. Med.">
        <title>Antibody-mediated inhibition of GDF15-GFRAL activity reverses cancer cachexia in mice.</title>
        <authorList>
            <person name="Suriben R."/>
            <person name="Chen M."/>
            <person name="Higbee J."/>
            <person name="Oeffinger J."/>
            <person name="Ventura R."/>
            <person name="Li B."/>
            <person name="Mondal K."/>
            <person name="Gao Z."/>
            <person name="Ayupova D."/>
            <person name="Taskar P."/>
            <person name="Li D."/>
            <person name="Starck S.R."/>
            <person name="Chen H.H."/>
            <person name="McEntee M."/>
            <person name="Katewa S.D."/>
            <person name="Phung V."/>
            <person name="Wang M."/>
            <person name="Kekatpure A."/>
            <person name="Lakshminarasimhan D."/>
            <person name="White A."/>
            <person name="Olland A."/>
            <person name="Haldankar R."/>
            <person name="Solloway M.J."/>
            <person name="Hsu J.Y."/>
            <person name="Wang Y."/>
            <person name="Tang J."/>
            <person name="Lindhout D.A."/>
            <person name="Allan B.B."/>
        </authorList>
    </citation>
    <scope>FUNCTION</scope>
</reference>
<reference key="31">
    <citation type="journal article" date="2021" name="Nat. Commun.">
        <title>Pharmacological but not physiological GDF15 suppresses feeding and the motivation to exercise.</title>
        <authorList>
            <person name="Klein A.B."/>
            <person name="Nicolaisen T.S."/>
            <person name="Oertenblad N."/>
            <person name="Gejl K.D."/>
            <person name="Jensen R."/>
            <person name="Fritzen A.M."/>
            <person name="Larsen E.L."/>
            <person name="Karstoft K."/>
            <person name="Poulsen H.E."/>
            <person name="Morville T."/>
            <person name="Sahl R.E."/>
            <person name="Helge J.W."/>
            <person name="Lund J."/>
            <person name="Falk S."/>
            <person name="Lyngbaek M."/>
            <person name="Ellingsgaard H."/>
            <person name="Pedersen B.K."/>
            <person name="Lu W."/>
            <person name="Finan B."/>
            <person name="Joergensen S.B."/>
            <person name="Seeley R.J."/>
            <person name="Kleinert M."/>
            <person name="Kiens B."/>
            <person name="Richter E.A."/>
            <person name="Clemmensen C."/>
        </authorList>
    </citation>
    <scope>FUNCTION</scope>
    <scope>INDUCTION</scope>
</reference>
<reference key="32">
    <citation type="journal article" date="2021" name="Nat. Metab.">
        <title>TFEB-GDF15 axis protects against obesity and insulin resistance as a lysosomal stress response.</title>
        <authorList>
            <person name="Kim J."/>
            <person name="Kim S.H."/>
            <person name="Kang H."/>
            <person name="Lee S."/>
            <person name="Park S.Y."/>
            <person name="Cho Y."/>
            <person name="Lim Y.M."/>
            <person name="Ahn J.W."/>
            <person name="Kim Y.H."/>
            <person name="Chung S."/>
            <person name="Choi C.S."/>
            <person name="Jang Y.J."/>
            <person name="Park H.S."/>
            <person name="Heo Y."/>
            <person name="Kim K.H."/>
            <person name="Lee M.S."/>
        </authorList>
    </citation>
    <scope>FUNCTION</scope>
    <scope>INDUCTION</scope>
</reference>
<reference key="33">
    <citation type="journal article" date="2021" name="Proc. Natl. Acad. Sci. U.S.A.">
        <title>Activation of the hypothalamic-pituitary-adrenal axis by exogenous and endogenous GDF15.</title>
        <authorList>
            <person name="Cimino I."/>
            <person name="Kim H."/>
            <person name="Tung Y.C.L."/>
            <person name="Pedersen K."/>
            <person name="Rimmington D."/>
            <person name="Tadross J.A."/>
            <person name="Kohnke S.N."/>
            <person name="Neves-Costa A."/>
            <person name="Barros A."/>
            <person name="Joaquim S."/>
            <person name="Bennett D."/>
            <person name="Melvin A."/>
            <person name="Lockhart S.M."/>
            <person name="Rostron A.J."/>
            <person name="Scott J."/>
            <person name="Liu H."/>
            <person name="Burling K."/>
            <person name="Barker P."/>
            <person name="Clatworthy M.R."/>
            <person name="Lee E.C."/>
            <person name="Simpson A.J."/>
            <person name="Yeo G.S.H."/>
            <person name="Moita L.F."/>
            <person name="Bence K.K."/>
            <person name="Joergensen S.B."/>
            <person name="Coll A.P."/>
            <person name="Breen D.M."/>
            <person name="O'Rahilly S."/>
        </authorList>
    </citation>
    <scope>FUNCTION</scope>
</reference>
<reference key="34">
    <citation type="journal article" date="2021" name="Proc. Natl. Acad. Sci. U.S.A.">
        <title>GFRAL-expressing neurons suppress food intake via aversive pathways.</title>
        <authorList>
            <person name="Sabatini P.V."/>
            <person name="Frikke-Schmidt H."/>
            <person name="Arthurs J."/>
            <person name="Gordian D."/>
            <person name="Patel A."/>
            <person name="Rupp A.C."/>
            <person name="Adams J.M."/>
            <person name="Wang J."/>
            <person name="Beck Joergensen S."/>
            <person name="Olson D.P."/>
            <person name="Palmiter R.D."/>
            <person name="Myers M.G. Jr."/>
            <person name="Seeley R.J."/>
        </authorList>
    </citation>
    <scope>FUNCTION</scope>
</reference>
<reference key="35">
    <citation type="journal article" date="2022" name="Cell Rep.">
        <title>The GDF15-GFRAL pathway is dispensable for the effects of metformin on energy balance.</title>
        <authorList>
            <person name="Klein A.B."/>
            <person name="Nicolaisen T.S."/>
            <person name="Johann K."/>
            <person name="Fritzen A.M."/>
            <person name="Mathiesen C.V."/>
            <person name="Gil C."/>
            <person name="Pilmark N.S."/>
            <person name="Karstoft K."/>
            <person name="Blond M.B."/>
            <person name="Quist J.S."/>
            <person name="Seeley R.J."/>
            <person name="Faerch K."/>
            <person name="Lund J."/>
            <person name="Kleinert M."/>
            <person name="Clemmensen C."/>
        </authorList>
    </citation>
    <scope>FUNCTION</scope>
</reference>
<reference key="36">
    <citation type="journal article" date="2022" name="IScience">
        <title>Hepatocyte-derived GDF15 suppresses feeding and improves insulin sensitivity in obese mice.</title>
        <authorList>
            <person name="Xie B."/>
            <person name="Murali A."/>
            <person name="Vandevender A.M."/>
            <person name="Chen J."/>
            <person name="Silva A.G."/>
            <person name="Bello F.M."/>
            <person name="Chuan B."/>
            <person name="Bahudhanapati H."/>
            <person name="Sipula I."/>
            <person name="Dedousis N."/>
            <person name="Shah F.A."/>
            <person name="O'Donnell C.P."/>
            <person name="Alder J.K."/>
            <person name="Jurczak M.J."/>
        </authorList>
    </citation>
    <scope>FUNCTION</scope>
    <scope>DISRUPTION PHENOTYPE</scope>
    <scope>TISSUE SPECIFICITY</scope>
</reference>
<reference key="37">
    <citation type="journal article" date="2022" name="PLoS Biol.">
        <title>Camptothecin effectively treats obesity in mice through GDF15 induction.</title>
        <authorList>
            <person name="Lu J.F."/>
            <person name="Zhu M.Q."/>
            <person name="Xie B.C."/>
            <person name="Shi X.C."/>
            <person name="Liu H."/>
            <person name="Zhang R.X."/>
            <person name="Xia B."/>
            <person name="Wu J.W."/>
        </authorList>
    </citation>
    <scope>FUNCTION</scope>
    <scope>SUBCELLULAR LOCATION</scope>
    <scope>TISSUE SPECIFICITY</scope>
    <scope>INDUCTION</scope>
</reference>
<reference key="38">
    <citation type="journal article" date="2023" name="Cell Metab.">
        <title>GDF15 enhances body weight and adiposity reduction in obese mice by leveraging the leptin pathway.</title>
        <authorList>
            <person name="Breit S.N."/>
            <person name="Manandhar R."/>
            <person name="Zhang H.P."/>
            <person name="Lee-Ng M."/>
            <person name="Brown D.A."/>
            <person name="Tsai V.W."/>
        </authorList>
    </citation>
    <scope>FUNCTION</scope>
</reference>
<reference key="39">
    <citation type="journal article" date="2023" name="Cell Metab.">
        <title>GDF15 is a major determinant of ketogenic diet-induced weight loss.</title>
        <authorList>
            <person name="Lu J.F."/>
            <person name="Zhu M.Q."/>
            <person name="Xia B."/>
            <person name="Zhang N.N."/>
            <person name="Liu X.P."/>
            <person name="Liu H."/>
            <person name="Zhang R.X."/>
            <person name="Xiao J.Y."/>
            <person name="Yang H."/>
            <person name="Zhang Y.Q."/>
            <person name="Li X.M."/>
            <person name="Wu J.W."/>
        </authorList>
    </citation>
    <scope>FUNCTION</scope>
    <scope>INDUCTION</scope>
</reference>
<reference key="40">
    <citation type="journal article" date="2023" name="Nature">
        <title>GDF15 promotes weight loss by enhancing energy expenditure in muscle.</title>
        <authorList>
            <person name="Wang D."/>
            <person name="Townsend L.K."/>
            <person name="DesOrmeaux G.J."/>
            <person name="Frangos S.M."/>
            <person name="Batchuluun B."/>
            <person name="Dumont L."/>
            <person name="Kuhre R.E."/>
            <person name="Ahmadi E."/>
            <person name="Hu S."/>
            <person name="Rebalka I.A."/>
            <person name="Gautam J."/>
            <person name="Jabile M.J.T."/>
            <person name="Pileggi C.A."/>
            <person name="Rehal S."/>
            <person name="Desjardins E.M."/>
            <person name="Tsakiridis E.E."/>
            <person name="Lally J.S.V."/>
            <person name="Juracic E.S."/>
            <person name="Tupling A.R."/>
            <person name="Gerstein H.C."/>
            <person name="Pare G."/>
            <person name="Tsakiridis T."/>
            <person name="Harper M.E."/>
            <person name="Hawke T.J."/>
            <person name="Speakman J.R."/>
            <person name="Blondin D.P."/>
            <person name="Holloway G.P."/>
            <person name="Joergensen S.B."/>
            <person name="Steinberg G.R."/>
        </authorList>
    </citation>
    <scope>FUNCTION</scope>
</reference>
<reference key="41">
    <citation type="journal article" date="2023" name="Nature">
        <title>Immune sensing of food allergens promotes avoidance behaviour.</title>
        <authorList>
            <person name="Florsheim E.B."/>
            <person name="Bachtel N.D."/>
            <person name="Cullen J.L."/>
            <person name="Lima B.G.C."/>
            <person name="Godazgar M."/>
            <person name="Carvalho F."/>
            <person name="Chatain C.P."/>
            <person name="Zimmer M.R."/>
            <person name="Zhang C."/>
            <person name="Gautier G."/>
            <person name="Launay P."/>
            <person name="Wang A."/>
            <person name="Dietrich M.O."/>
            <person name="Medzhitov R."/>
        </authorList>
    </citation>
    <scope>FUNCTION</scope>
</reference>
<reference key="42">
    <citation type="journal article" date="2023" name="Nature">
        <title>GDF15 linked to maternal risk of nausea and vomiting during pregnancy.</title>
        <authorList>
            <person name="Fejzo M."/>
            <person name="Rocha N."/>
            <person name="Cimino I."/>
            <person name="Lockhart S.M."/>
            <person name="Petry C.J."/>
            <person name="Kay R.G."/>
            <person name="Burling K."/>
            <person name="Barker P."/>
            <person name="George A.L."/>
            <person name="Yasara N."/>
            <person name="Premawardhena A."/>
            <person name="Gong S."/>
            <person name="Cook E."/>
            <person name="Rimmington D."/>
            <person name="Rainbow K."/>
            <person name="Withers D.J."/>
            <person name="Cortessis V."/>
            <person name="Mullin P.M."/>
            <person name="MacGibbon K.W."/>
            <person name="Jin E."/>
            <person name="Kam A."/>
            <person name="Campbell A."/>
            <person name="Polasek O."/>
            <person name="Tzoneva G."/>
            <person name="Gribble F.M."/>
            <person name="Yeo G.S.H."/>
            <person name="Lam B.Y.H."/>
            <person name="Saudek V."/>
            <person name="Hughes I.A."/>
            <person name="Ong K.K."/>
            <person name="Perry J.R.B."/>
            <person name="Sutton Cole A."/>
            <person name="Baumgarten M."/>
            <person name="Welsh P."/>
            <person name="Sattar N."/>
            <person name="Smith G.C.S."/>
            <person name="Charnock-Jones D.S."/>
            <person name="Coll A.P."/>
            <person name="Meek C.L."/>
            <person name="Mettananda S."/>
            <person name="Hayward C."/>
            <person name="Mancuso N."/>
            <person name="O'Rahilly S."/>
        </authorList>
    </citation>
    <scope>FUNCTION</scope>
</reference>
<proteinExistence type="evidence at protein level"/>
<feature type="signal peptide" evidence="2">
    <location>
        <begin position="1"/>
        <end position="30"/>
    </location>
</feature>
<feature type="propeptide" id="PRO_0000033994" evidence="2">
    <location>
        <begin position="31"/>
        <end position="188"/>
    </location>
</feature>
<feature type="chain" id="PRO_0000033995" description="Growth/differentiation factor 15">
    <location>
        <begin position="189"/>
        <end position="303"/>
    </location>
</feature>
<feature type="glycosylation site" description="N-linked (GlcNAc...) asparagine" evidence="2">
    <location>
        <position position="71"/>
    </location>
</feature>
<feature type="disulfide bond" evidence="1">
    <location>
        <begin position="198"/>
        <end position="205"/>
    </location>
</feature>
<feature type="disulfide bond" evidence="1">
    <location>
        <begin position="206"/>
        <end position="269"/>
    </location>
</feature>
<feature type="disulfide bond" evidence="1">
    <location>
        <begin position="235"/>
        <end position="300"/>
    </location>
</feature>
<feature type="disulfide bond" evidence="1">
    <location>
        <begin position="239"/>
        <end position="302"/>
    </location>
</feature>
<feature type="disulfide bond" description="Interchain" evidence="1">
    <location>
        <position position="268"/>
    </location>
</feature>
<feature type="sequence conflict" description="In Ref. 1; CAA09890 and 2; AAD41410." evidence="42" ref="1 2">
    <original>P</original>
    <variation>R</variation>
    <location>
        <position position="45"/>
    </location>
</feature>
<feature type="sequence conflict" description="In Ref. 1; CAA09890 and 2; AAD41410." evidence="42" ref="1 2">
    <original>A</original>
    <variation>T</variation>
    <location>
        <position position="132"/>
    </location>
</feature>
<feature type="sequence conflict" description="In Ref. 1; CAA09890 and 2; AAD41410." evidence="42" ref="1 2">
    <original>R</original>
    <variation>Q</variation>
    <location>
        <position position="148"/>
    </location>
</feature>
<feature type="sequence conflict" description="In Ref. 1; CAA09890 and 2; AAD41410." evidence="42" ref="1 2">
    <original>T</original>
    <variation>A</variation>
    <location>
        <position position="173"/>
    </location>
</feature>
<accession>Q9Z0J7</accession>
<accession>Q6NX63</accession>
<sequence length="303" mass="33225">MAPPALQAQPPGGSQLRFLLFLLLLLLLLSWPSQGDALAMPEQRPSGPESQLNADELRGRFQDLLSRLHANQSREDSNSEPSPDPAVRILSPEVRLGSHGQLLLRVNRASLSQGLPEAYRVHRALLLLTPTARPWDITRPLKRALSLRGPRAPALRLRLTPPPDLAMLPSGGTQLELRLRVAAGRGRRSAHAHPRDSCPLGPGRCCHLETVQATLEDLGWSDWVLSPRQLQLSMCVGECPHLYRSANTHAQIKARLHGLQPDKVPAPCCVPSSYTPVVLMHRTDSGVSLQTYDDLVARGCHCA</sequence>
<keyword id="KW-0165">Cleavage on pair of basic residues</keyword>
<keyword id="KW-0202">Cytokine</keyword>
<keyword id="KW-1015">Disulfide bond</keyword>
<keyword id="KW-0325">Glycoprotein</keyword>
<keyword id="KW-0372">Hormone</keyword>
<keyword id="KW-1185">Reference proteome</keyword>
<keyword id="KW-0964">Secreted</keyword>
<keyword id="KW-0732">Signal</keyword>
<protein>
    <recommendedName>
        <fullName evidence="39">Growth/differentiation factor 15</fullName>
        <shortName evidence="39">GDF-15</shortName>
    </recommendedName>
    <alternativeName>
        <fullName evidence="40">Macrophage inhibitory cytokine 1</fullName>
        <shortName evidence="40 41">MIC-1</shortName>
    </alternativeName>
</protein>